<gene>
    <name evidence="1" type="primary">efp</name>
    <name type="ordered locus">HAPS_0175</name>
</gene>
<comment type="function">
    <text evidence="1">Involved in peptide bond synthesis. Alleviates ribosome stalling that occurs when 3 or more consecutive Pro residues or the sequence PPG is present in a protein, possibly by augmenting the peptidyl transferase activity of the ribosome. Modification of Lys-34 is required for alleviation.</text>
</comment>
<comment type="pathway">
    <text evidence="1">Protein biosynthesis; polypeptide chain elongation.</text>
</comment>
<comment type="subcellular location">
    <subcellularLocation>
        <location evidence="1">Cytoplasm</location>
    </subcellularLocation>
</comment>
<comment type="PTM">
    <text evidence="1">May be beta-lysylated on the epsilon-amino group of Lys-34 by the combined action of EpmA and EpmB, and then hydroxylated on the C5 position of the same residue by EpmC (if this protein is present). Lysylation is critical for the stimulatory effect of EF-P on peptide-bond formation. The lysylation moiety may extend toward the peptidyltransferase center and stabilize the terminal 3-CCA end of the tRNA. Hydroxylation of the C5 position on Lys-34 may allow additional potential stabilizing hydrogen-bond interactions with the P-tRNA.</text>
</comment>
<comment type="similarity">
    <text evidence="1">Belongs to the elongation factor P family.</text>
</comment>
<organism>
    <name type="scientific">Glaesserella parasuis serovar 5 (strain SH0165)</name>
    <name type="common">Haemophilus parasuis</name>
    <dbReference type="NCBI Taxonomy" id="557723"/>
    <lineage>
        <taxon>Bacteria</taxon>
        <taxon>Pseudomonadati</taxon>
        <taxon>Pseudomonadota</taxon>
        <taxon>Gammaproteobacteria</taxon>
        <taxon>Pasteurellales</taxon>
        <taxon>Pasteurellaceae</taxon>
        <taxon>Glaesserella</taxon>
    </lineage>
</organism>
<proteinExistence type="inferred from homology"/>
<name>EFP_GLAP5</name>
<protein>
    <recommendedName>
        <fullName evidence="1">Elongation factor P</fullName>
        <shortName evidence="1">EF-P</shortName>
    </recommendedName>
</protein>
<keyword id="KW-0963">Cytoplasm</keyword>
<keyword id="KW-0251">Elongation factor</keyword>
<keyword id="KW-0379">Hydroxylation</keyword>
<keyword id="KW-0648">Protein biosynthesis</keyword>
<keyword id="KW-1185">Reference proteome</keyword>
<accession>B8F3G9</accession>
<reference key="1">
    <citation type="journal article" date="2009" name="J. Bacteriol.">
        <title>Complete genome sequence of Haemophilus parasuis SH0165.</title>
        <authorList>
            <person name="Yue M."/>
            <person name="Yang F."/>
            <person name="Yang J."/>
            <person name="Bei W."/>
            <person name="Cai X."/>
            <person name="Chen L."/>
            <person name="Dong J."/>
            <person name="Zhou R."/>
            <person name="Jin M."/>
            <person name="Jin Q."/>
            <person name="Chen H."/>
        </authorList>
    </citation>
    <scope>NUCLEOTIDE SEQUENCE [LARGE SCALE GENOMIC DNA]</scope>
    <source>
        <strain>SH0165</strain>
    </source>
</reference>
<dbReference type="EMBL" id="CP001321">
    <property type="protein sequence ID" value="ACL31871.1"/>
    <property type="molecule type" value="Genomic_DNA"/>
</dbReference>
<dbReference type="RefSeq" id="WP_005713863.1">
    <property type="nucleotide sequence ID" value="NC_011852.1"/>
</dbReference>
<dbReference type="SMR" id="B8F3G9"/>
<dbReference type="STRING" id="557723.HAPS_0175"/>
<dbReference type="KEGG" id="hap:HAPS_0175"/>
<dbReference type="HOGENOM" id="CLU_074944_0_0_6"/>
<dbReference type="UniPathway" id="UPA00345"/>
<dbReference type="Proteomes" id="UP000006743">
    <property type="component" value="Chromosome"/>
</dbReference>
<dbReference type="GO" id="GO:0005737">
    <property type="term" value="C:cytoplasm"/>
    <property type="evidence" value="ECO:0007669"/>
    <property type="project" value="UniProtKB-SubCell"/>
</dbReference>
<dbReference type="GO" id="GO:0003746">
    <property type="term" value="F:translation elongation factor activity"/>
    <property type="evidence" value="ECO:0007669"/>
    <property type="project" value="UniProtKB-UniRule"/>
</dbReference>
<dbReference type="GO" id="GO:0043043">
    <property type="term" value="P:peptide biosynthetic process"/>
    <property type="evidence" value="ECO:0007669"/>
    <property type="project" value="InterPro"/>
</dbReference>
<dbReference type="CDD" id="cd04470">
    <property type="entry name" value="S1_EF-P_repeat_1"/>
    <property type="match status" value="1"/>
</dbReference>
<dbReference type="CDD" id="cd05794">
    <property type="entry name" value="S1_EF-P_repeat_2"/>
    <property type="match status" value="1"/>
</dbReference>
<dbReference type="FunFam" id="2.30.30.30:FF:000003">
    <property type="entry name" value="Elongation factor P"/>
    <property type="match status" value="1"/>
</dbReference>
<dbReference type="FunFam" id="2.40.50.140:FF:000004">
    <property type="entry name" value="Elongation factor P"/>
    <property type="match status" value="1"/>
</dbReference>
<dbReference type="FunFam" id="2.40.50.140:FF:000009">
    <property type="entry name" value="Elongation factor P"/>
    <property type="match status" value="1"/>
</dbReference>
<dbReference type="Gene3D" id="2.30.30.30">
    <property type="match status" value="1"/>
</dbReference>
<dbReference type="Gene3D" id="2.40.50.140">
    <property type="entry name" value="Nucleic acid-binding proteins"/>
    <property type="match status" value="2"/>
</dbReference>
<dbReference type="HAMAP" id="MF_00141">
    <property type="entry name" value="EF_P"/>
    <property type="match status" value="1"/>
</dbReference>
<dbReference type="InterPro" id="IPR015365">
    <property type="entry name" value="Elong-fact-P_C"/>
</dbReference>
<dbReference type="InterPro" id="IPR012340">
    <property type="entry name" value="NA-bd_OB-fold"/>
</dbReference>
<dbReference type="InterPro" id="IPR014722">
    <property type="entry name" value="Rib_uL2_dom2"/>
</dbReference>
<dbReference type="InterPro" id="IPR020599">
    <property type="entry name" value="Transl_elong_fac_P/YeiP"/>
</dbReference>
<dbReference type="InterPro" id="IPR013185">
    <property type="entry name" value="Transl_elong_KOW-like"/>
</dbReference>
<dbReference type="InterPro" id="IPR001059">
    <property type="entry name" value="Transl_elong_P/YeiP_cen"/>
</dbReference>
<dbReference type="InterPro" id="IPR013852">
    <property type="entry name" value="Transl_elong_P/YeiP_CS"/>
</dbReference>
<dbReference type="InterPro" id="IPR011768">
    <property type="entry name" value="Transl_elongation_fac_P"/>
</dbReference>
<dbReference type="InterPro" id="IPR008991">
    <property type="entry name" value="Translation_prot_SH3-like_sf"/>
</dbReference>
<dbReference type="NCBIfam" id="TIGR00038">
    <property type="entry name" value="efp"/>
    <property type="match status" value="1"/>
</dbReference>
<dbReference type="NCBIfam" id="NF001810">
    <property type="entry name" value="PRK00529.1"/>
    <property type="match status" value="1"/>
</dbReference>
<dbReference type="PANTHER" id="PTHR30053">
    <property type="entry name" value="ELONGATION FACTOR P"/>
    <property type="match status" value="1"/>
</dbReference>
<dbReference type="PANTHER" id="PTHR30053:SF12">
    <property type="entry name" value="ELONGATION FACTOR P (EF-P) FAMILY PROTEIN"/>
    <property type="match status" value="1"/>
</dbReference>
<dbReference type="Pfam" id="PF01132">
    <property type="entry name" value="EFP"/>
    <property type="match status" value="1"/>
</dbReference>
<dbReference type="Pfam" id="PF08207">
    <property type="entry name" value="EFP_N"/>
    <property type="match status" value="1"/>
</dbReference>
<dbReference type="Pfam" id="PF09285">
    <property type="entry name" value="Elong-fact-P_C"/>
    <property type="match status" value="1"/>
</dbReference>
<dbReference type="PIRSF" id="PIRSF005901">
    <property type="entry name" value="EF-P"/>
    <property type="match status" value="1"/>
</dbReference>
<dbReference type="SMART" id="SM01185">
    <property type="entry name" value="EFP"/>
    <property type="match status" value="1"/>
</dbReference>
<dbReference type="SMART" id="SM00841">
    <property type="entry name" value="Elong-fact-P_C"/>
    <property type="match status" value="1"/>
</dbReference>
<dbReference type="SUPFAM" id="SSF50249">
    <property type="entry name" value="Nucleic acid-binding proteins"/>
    <property type="match status" value="2"/>
</dbReference>
<dbReference type="SUPFAM" id="SSF50104">
    <property type="entry name" value="Translation proteins SH3-like domain"/>
    <property type="match status" value="1"/>
</dbReference>
<dbReference type="PROSITE" id="PS01275">
    <property type="entry name" value="EFP"/>
    <property type="match status" value="1"/>
</dbReference>
<sequence>MASYSTNDFKPGLKFIQDGEPCVIVENEFVKPGKGQAFTRTKIRKLISGKVLEINFKSGSTVEAADVVDYNYTYSYKDEDFWYFMHPETFEQISVDSKALGDNDKWLVDQAECIITLWNGSAIGVTPPNFVELEVIETDPGLKGDTAGTGGKPATLSTGAVVRVPLFVQIGEVIRVDTRSGEYVSRVK</sequence>
<feature type="chain" id="PRO_1000123011" description="Elongation factor P">
    <location>
        <begin position="1"/>
        <end position="188"/>
    </location>
</feature>
<feature type="modified residue" description="N6-(3,6-diaminohexanoyl)-5-hydroxylysine" evidence="1">
    <location>
        <position position="34"/>
    </location>
</feature>
<evidence type="ECO:0000255" key="1">
    <source>
        <dbReference type="HAMAP-Rule" id="MF_00141"/>
    </source>
</evidence>